<comment type="catalytic activity">
    <reaction evidence="5">
        <text>catechol + O2 = cis,cis-muconate + 2 H(+)</text>
        <dbReference type="Rhea" id="RHEA:23852"/>
        <dbReference type="ChEBI" id="CHEBI:15378"/>
        <dbReference type="ChEBI" id="CHEBI:15379"/>
        <dbReference type="ChEBI" id="CHEBI:18135"/>
        <dbReference type="ChEBI" id="CHEBI:32379"/>
        <dbReference type="EC" id="1.13.11.1"/>
    </reaction>
</comment>
<comment type="cofactor">
    <cofactor evidence="1">
        <name>Fe(3+)</name>
        <dbReference type="ChEBI" id="CHEBI:29034"/>
    </cofactor>
    <text evidence="1">Binds 1 Fe(3+) ion per subunit.</text>
</comment>
<comment type="pathway">
    <text>Aromatic compound metabolism; beta-ketoadipate pathway; 5-oxo-4,5-dihydro-2-furylacetate from catechol: step 1/3.</text>
</comment>
<comment type="subunit">
    <text evidence="1">Homodimer.</text>
</comment>
<comment type="domain">
    <text evidence="1">Contains a helical zipper domain, consisting of five N-terminal helices from each subunit, which forms the molecular dimer axis.</text>
</comment>
<comment type="similarity">
    <text evidence="4">Belongs to the intradiol ring-cleavage dioxygenase family.</text>
</comment>
<reference key="1">
    <citation type="journal article" date="1988" name="J. Bacteriol.">
        <title>DNA sequence of the Acinetobacter calcoaceticus catechol 1,2-dioxygenase I structural gene catA: evidence for evolutionary divergence of intradiol dioxygenases by acquisition of DNA sequence repetitions.</title>
        <authorList>
            <person name="Neidle E.L."/>
            <person name="Hartnett C."/>
            <person name="Bonitz S."/>
            <person name="Ornston L.N."/>
        </authorList>
    </citation>
    <scope>NUCLEOTIDE SEQUENCE [GENOMIC DNA]</scope>
</reference>
<reference key="2">
    <citation type="journal article" date="2004" name="Nucleic Acids Res.">
        <title>Unique features revealed by the genome sequence of Acinetobacter sp. ADP1, a versatile and naturally transformation competent bacterium.</title>
        <authorList>
            <person name="Barbe V."/>
            <person name="Vallenet D."/>
            <person name="Fonknechten N."/>
            <person name="Kreimeyer A."/>
            <person name="Oztas S."/>
            <person name="Labarre L."/>
            <person name="Cruveiller S."/>
            <person name="Robert C."/>
            <person name="Duprat S."/>
            <person name="Wincker P."/>
            <person name="Ornston L.N."/>
            <person name="Weissenbach J."/>
            <person name="Marliere P."/>
            <person name="Cohen G.N."/>
            <person name="Medigue C."/>
        </authorList>
    </citation>
    <scope>NUCLEOTIDE SEQUENCE [LARGE SCALE GENOMIC DNA]</scope>
    <source>
        <strain>ATCC 33305 / BD413 / ADP1</strain>
    </source>
</reference>
<reference evidence="6 7 8 9" key="3">
    <citation type="journal article" date="2000" name="Structure">
        <title>The 1.8 A crystal structure of catechol 1,2-dioxygenase reveals a novel hydrophobic helical zipper as a subunit linker.</title>
        <authorList>
            <person name="Vetting M.W."/>
            <person name="Ohlendorf D.H."/>
        </authorList>
    </citation>
    <scope>X-RAY CRYSTALLOGRAPHY (1.70 ANGSTROMS) IN COMPLEXES WITH IRON AND CATECHOL</scope>
    <scope>COFACTOR</scope>
    <scope>SUBUNIT</scope>
    <scope>DOMAIN</scope>
</reference>
<gene>
    <name evidence="3" type="primary">catA</name>
    <name type="ordered locus">ACIAD1442</name>
</gene>
<name>CATA_ACIAD</name>
<feature type="chain" id="PRO_0000085078" description="Catechol 1,2-dioxygenase">
    <location>
        <begin position="1"/>
        <end position="311"/>
    </location>
</feature>
<feature type="binding site" evidence="1 8">
    <location>
        <position position="164"/>
    </location>
    <ligand>
        <name>catechol</name>
        <dbReference type="ChEBI" id="CHEBI:18135"/>
    </ligand>
</feature>
<feature type="binding site" evidence="1 6 7 8 9">
    <location>
        <position position="164"/>
    </location>
    <ligand>
        <name>Fe cation</name>
        <dbReference type="ChEBI" id="CHEBI:24875"/>
    </ligand>
</feature>
<feature type="binding site" evidence="1 6 7">
    <location>
        <position position="200"/>
    </location>
    <ligand>
        <name>Fe cation</name>
        <dbReference type="ChEBI" id="CHEBI:24875"/>
    </ligand>
</feature>
<feature type="binding site" evidence="1 8">
    <location>
        <begin position="224"/>
        <end position="226"/>
    </location>
    <ligand>
        <name>catechol</name>
        <dbReference type="ChEBI" id="CHEBI:18135"/>
    </ligand>
</feature>
<feature type="binding site" evidence="1 6 7 8 9">
    <location>
        <position position="224"/>
    </location>
    <ligand>
        <name>Fe cation</name>
        <dbReference type="ChEBI" id="CHEBI:24875"/>
    </ligand>
</feature>
<feature type="binding site" evidence="1 6 7 8 9">
    <location>
        <position position="226"/>
    </location>
    <ligand>
        <name>Fe cation</name>
        <dbReference type="ChEBI" id="CHEBI:24875"/>
    </ligand>
</feature>
<feature type="helix" evidence="11">
    <location>
        <begin position="9"/>
        <end position="18"/>
    </location>
</feature>
<feature type="turn" evidence="11">
    <location>
        <begin position="19"/>
        <end position="22"/>
    </location>
</feature>
<feature type="strand" evidence="11">
    <location>
        <begin position="24"/>
        <end position="26"/>
    </location>
</feature>
<feature type="helix" evidence="11">
    <location>
        <begin position="28"/>
        <end position="47"/>
    </location>
</feature>
<feature type="helix" evidence="11">
    <location>
        <begin position="52"/>
        <end position="67"/>
    </location>
</feature>
<feature type="helix" evidence="11">
    <location>
        <begin position="71"/>
        <end position="77"/>
    </location>
</feature>
<feature type="helix" evidence="11">
    <location>
        <begin position="80"/>
        <end position="94"/>
    </location>
</feature>
<feature type="strand" evidence="11">
    <location>
        <begin position="116"/>
        <end position="122"/>
    </location>
</feature>
<feature type="strand" evidence="11">
    <location>
        <begin position="133"/>
        <end position="141"/>
    </location>
</feature>
<feature type="strand" evidence="11">
    <location>
        <begin position="152"/>
        <end position="156"/>
    </location>
</feature>
<feature type="strand" evidence="10">
    <location>
        <begin position="169"/>
        <end position="171"/>
    </location>
</feature>
<feature type="turn" evidence="11">
    <location>
        <begin position="175"/>
        <end position="178"/>
    </location>
</feature>
<feature type="strand" evidence="11">
    <location>
        <begin position="179"/>
        <end position="183"/>
    </location>
</feature>
<feature type="strand" evidence="11">
    <location>
        <begin position="188"/>
        <end position="195"/>
    </location>
</feature>
<feature type="helix" evidence="11">
    <location>
        <begin position="207"/>
        <end position="214"/>
    </location>
</feature>
<feature type="strand" evidence="11">
    <location>
        <begin position="223"/>
        <end position="230"/>
    </location>
</feature>
<feature type="strand" evidence="11">
    <location>
        <begin position="237"/>
        <end position="243"/>
    </location>
</feature>
<feature type="turn" evidence="11">
    <location>
        <begin position="247"/>
        <end position="250"/>
    </location>
</feature>
<feature type="strand" evidence="11">
    <location>
        <begin position="266"/>
        <end position="268"/>
    </location>
</feature>
<feature type="helix" evidence="11">
    <location>
        <begin position="271"/>
        <end position="276"/>
    </location>
</feature>
<feature type="strand" evidence="11">
    <location>
        <begin position="283"/>
        <end position="287"/>
    </location>
</feature>
<evidence type="ECO:0000269" key="1">
    <source>
    </source>
</evidence>
<evidence type="ECO:0000303" key="2">
    <source>
    </source>
</evidence>
<evidence type="ECO:0000303" key="3">
    <source>
    </source>
</evidence>
<evidence type="ECO:0000305" key="4"/>
<evidence type="ECO:0000305" key="5">
    <source>
    </source>
</evidence>
<evidence type="ECO:0007744" key="6">
    <source>
        <dbReference type="PDB" id="1DLM"/>
    </source>
</evidence>
<evidence type="ECO:0007744" key="7">
    <source>
        <dbReference type="PDB" id="1DLQ"/>
    </source>
</evidence>
<evidence type="ECO:0007744" key="8">
    <source>
        <dbReference type="PDB" id="1DLT"/>
    </source>
</evidence>
<evidence type="ECO:0007744" key="9">
    <source>
        <dbReference type="PDB" id="1DMH"/>
    </source>
</evidence>
<evidence type="ECO:0007829" key="10">
    <source>
        <dbReference type="PDB" id="1DLT"/>
    </source>
</evidence>
<evidence type="ECO:0007829" key="11">
    <source>
        <dbReference type="PDB" id="1DMH"/>
    </source>
</evidence>
<dbReference type="EC" id="1.13.11.1" evidence="5"/>
<dbReference type="EMBL" id="AF009224">
    <property type="protein sequence ID" value="AAC46426.1"/>
    <property type="molecule type" value="Genomic_DNA"/>
</dbReference>
<dbReference type="EMBL" id="CR543861">
    <property type="protein sequence ID" value="CAG68305.1"/>
    <property type="molecule type" value="Genomic_DNA"/>
</dbReference>
<dbReference type="RefSeq" id="WP_004925474.1">
    <property type="nucleotide sequence ID" value="NC_005966.1"/>
</dbReference>
<dbReference type="PDB" id="1DLM">
    <property type="method" value="X-ray"/>
    <property type="resolution" value="2.00 A"/>
    <property type="chains" value="A/B=1-311"/>
</dbReference>
<dbReference type="PDB" id="1DLQ">
    <property type="method" value="X-ray"/>
    <property type="resolution" value="2.30 A"/>
    <property type="chains" value="A/B=1-311"/>
</dbReference>
<dbReference type="PDB" id="1DLT">
    <property type="method" value="X-ray"/>
    <property type="resolution" value="1.90 A"/>
    <property type="chains" value="A/B=1-311"/>
</dbReference>
<dbReference type="PDB" id="1DMH">
    <property type="method" value="X-ray"/>
    <property type="resolution" value="1.70 A"/>
    <property type="chains" value="A/B=1-311"/>
</dbReference>
<dbReference type="PDBsum" id="1DLM"/>
<dbReference type="PDBsum" id="1DLQ"/>
<dbReference type="PDBsum" id="1DLT"/>
<dbReference type="PDBsum" id="1DMH"/>
<dbReference type="SMR" id="P07773"/>
<dbReference type="STRING" id="202950.GCA_001485005_01196"/>
<dbReference type="DrugBank" id="DB02232">
    <property type="generic name" value="1,2-Dihydroxybenzene"/>
</dbReference>
<dbReference type="DrugBank" id="DB04120">
    <property type="generic name" value="4-Methyl-1,2-Benzenediol"/>
</dbReference>
<dbReference type="GeneID" id="45233854"/>
<dbReference type="KEGG" id="aci:ACIAD1442"/>
<dbReference type="eggNOG" id="COG3485">
    <property type="taxonomic scope" value="Bacteria"/>
</dbReference>
<dbReference type="HOGENOM" id="CLU_046727_0_0_6"/>
<dbReference type="OrthoDB" id="9800887at2"/>
<dbReference type="BioCyc" id="ASP62977:ACIAD_RS06660-MONOMER"/>
<dbReference type="BRENDA" id="1.13.11.1">
    <property type="organism ID" value="95"/>
</dbReference>
<dbReference type="UniPathway" id="UPA00157">
    <property type="reaction ID" value="UER00258"/>
</dbReference>
<dbReference type="EvolutionaryTrace" id="P07773"/>
<dbReference type="Proteomes" id="UP000000430">
    <property type="component" value="Chromosome"/>
</dbReference>
<dbReference type="GO" id="GO:0018576">
    <property type="term" value="F:catechol 1,2-dioxygenase activity"/>
    <property type="evidence" value="ECO:0000314"/>
    <property type="project" value="UniProtKB"/>
</dbReference>
<dbReference type="GO" id="GO:0008199">
    <property type="term" value="F:ferric iron binding"/>
    <property type="evidence" value="ECO:0000314"/>
    <property type="project" value="UniProtKB"/>
</dbReference>
<dbReference type="GO" id="GO:0042952">
    <property type="term" value="P:beta-ketoadipate pathway"/>
    <property type="evidence" value="ECO:0007669"/>
    <property type="project" value="UniProtKB-UniPathway"/>
</dbReference>
<dbReference type="GO" id="GO:0019614">
    <property type="term" value="P:catechol-containing compound catabolic process"/>
    <property type="evidence" value="ECO:0000314"/>
    <property type="project" value="UniProtKB"/>
</dbReference>
<dbReference type="CDD" id="cd03460">
    <property type="entry name" value="1_2-CTD"/>
    <property type="match status" value="1"/>
</dbReference>
<dbReference type="FunFam" id="2.60.130.10:FF:000003">
    <property type="entry name" value="Catechol 1,2-dioxygenase"/>
    <property type="match status" value="1"/>
</dbReference>
<dbReference type="Gene3D" id="2.60.130.10">
    <property type="entry name" value="Aromatic compound dioxygenase"/>
    <property type="match status" value="1"/>
</dbReference>
<dbReference type="InterPro" id="IPR007535">
    <property type="entry name" value="Catechol_dOase_N"/>
</dbReference>
<dbReference type="InterPro" id="IPR012801">
    <property type="entry name" value="Cchol_dOase_prob"/>
</dbReference>
<dbReference type="InterPro" id="IPR000627">
    <property type="entry name" value="Intradiol_dOase_C"/>
</dbReference>
<dbReference type="InterPro" id="IPR015889">
    <property type="entry name" value="Intradiol_dOase_core"/>
</dbReference>
<dbReference type="InterPro" id="IPR050770">
    <property type="entry name" value="Intradiol_RC_Dioxygenase"/>
</dbReference>
<dbReference type="NCBIfam" id="TIGR02439">
    <property type="entry name" value="catechol_proteo"/>
    <property type="match status" value="1"/>
</dbReference>
<dbReference type="PANTHER" id="PTHR33711">
    <property type="entry name" value="DIOXYGENASE, PUTATIVE (AFU_ORTHOLOGUE AFUA_2G02910)-RELATED"/>
    <property type="match status" value="1"/>
</dbReference>
<dbReference type="PANTHER" id="PTHR33711:SF7">
    <property type="entry name" value="INTRADIOL RING-CLEAVAGE DIOXYGENASES DOMAIN-CONTAINING PROTEIN-RELATED"/>
    <property type="match status" value="1"/>
</dbReference>
<dbReference type="Pfam" id="PF00775">
    <property type="entry name" value="Dioxygenase_C"/>
    <property type="match status" value="1"/>
</dbReference>
<dbReference type="Pfam" id="PF04444">
    <property type="entry name" value="Dioxygenase_N"/>
    <property type="match status" value="1"/>
</dbReference>
<dbReference type="SUPFAM" id="SSF49482">
    <property type="entry name" value="Aromatic compound dioxygenase"/>
    <property type="match status" value="1"/>
</dbReference>
<dbReference type="PROSITE" id="PS00083">
    <property type="entry name" value="INTRADIOL_DIOXYGENAS"/>
    <property type="match status" value="1"/>
</dbReference>
<protein>
    <recommendedName>
        <fullName evidence="3">Catechol 1,2-dioxygenase</fullName>
        <ecNumber evidence="5">1.13.11.1</ecNumber>
    </recommendedName>
    <alternativeName>
        <fullName evidence="2">1,2-CTD</fullName>
    </alternativeName>
</protein>
<keyword id="KW-0002">3D-structure</keyword>
<keyword id="KW-0058">Aromatic hydrocarbons catabolism</keyword>
<keyword id="KW-0223">Dioxygenase</keyword>
<keyword id="KW-0408">Iron</keyword>
<keyword id="KW-0479">Metal-binding</keyword>
<keyword id="KW-0560">Oxidoreductase</keyword>
<sequence length="311" mass="34347">MEVKIFNTQDVQDFLRVASGLEQEGGNPRVKQIIHRVLSDLYKAIEDLNITSDEYWAGVAYLNQLGANQEAGLLSPGLGFDHYLDMRMDAEDAALGIENATPRTIEGPLYVAGAPESVGYARMDDGSDPNGHTLILHGTIFDADGKPLPNAKVEIWHANTKGFYSHFDPTGEQQAFNMRRSIITDENGQYRVRTILPAGYGCPPEGPTQQLLNQLGRHGNRPAHIHYFVSADGHRKLTTQINVAGDPYTYDDFAYATREGLVVDAVEHTDPEAIKANDVEGPFAEMVFDLKLTRLVDGVDNQVVDRPRLAV</sequence>
<proteinExistence type="evidence at protein level"/>
<accession>P07773</accession>
<organism>
    <name type="scientific">Acinetobacter baylyi (strain ATCC 33305 / BD413 / ADP1)</name>
    <dbReference type="NCBI Taxonomy" id="62977"/>
    <lineage>
        <taxon>Bacteria</taxon>
        <taxon>Pseudomonadati</taxon>
        <taxon>Pseudomonadota</taxon>
        <taxon>Gammaproteobacteria</taxon>
        <taxon>Moraxellales</taxon>
        <taxon>Moraxellaceae</taxon>
        <taxon>Acinetobacter</taxon>
    </lineage>
</organism>